<name>NUP1A_XENLA</name>
<reference key="1">
    <citation type="submission" date="2005-10" db="EMBL/GenBank/DDBJ databases">
        <authorList>
            <consortium name="NIH - Xenopus Gene Collection (XGC) project"/>
        </authorList>
    </citation>
    <scope>NUCLEOTIDE SEQUENCE [LARGE SCALE MRNA]</scope>
    <source>
        <tissue>Embryo</tissue>
        <tissue>Kidney</tissue>
    </source>
</reference>
<protein>
    <recommendedName>
        <fullName evidence="1">Cytosolic Fe-S cluster assembly factor nubp1-A</fullName>
    </recommendedName>
    <alternativeName>
        <fullName evidence="1">Nucleotide-binding protein 1-A</fullName>
        <shortName evidence="1">NBP 1-A</shortName>
    </alternativeName>
</protein>
<sequence>MADIPDNAPQHCPGTDSTEAGKSSACQGCPNQSICASGAAAGPDPAIEEIKEKMSLVKHKILVLSGKGGVGKSTFSAHLAHGLAQDEGKEVALLDVDICGPSIPKMMGLEGEQVHQSGSGWSPVYVEDNLAVMSVGFLLSSPDDAVIWRGPKKNGMIKQFLRDVDWGDVDYLIVDTPPGTSDEHLSVVQYLSAAGIDGAVIITTPQEVSLQDVRKEINFCRKVKLPIIGVVENMSGFICPKCKNESQIFPPTTGGAEKMCTDLSVSLLGKVPLDPNIGKSCDTGKSFFTEIPDSPATLSYRKIIQRIQDYCEKKK</sequence>
<keyword id="KW-0004">4Fe-4S</keyword>
<keyword id="KW-0067">ATP-binding</keyword>
<keyword id="KW-0963">Cytoplasm</keyword>
<keyword id="KW-0408">Iron</keyword>
<keyword id="KW-0411">Iron-sulfur</keyword>
<keyword id="KW-0479">Metal-binding</keyword>
<keyword id="KW-0547">Nucleotide-binding</keyword>
<keyword id="KW-1185">Reference proteome</keyword>
<gene>
    <name type="primary">nubp1-A</name>
</gene>
<feature type="chain" id="PRO_0000382593" description="Cytosolic Fe-S cluster assembly factor nubp1-A">
    <location>
        <begin position="1"/>
        <end position="315"/>
    </location>
</feature>
<feature type="region of interest" description="Disordered" evidence="2">
    <location>
        <begin position="1"/>
        <end position="23"/>
    </location>
</feature>
<feature type="binding site" evidence="1">
    <location>
        <position position="12"/>
    </location>
    <ligand>
        <name>[4Fe-4S] cluster</name>
        <dbReference type="ChEBI" id="CHEBI:49883"/>
        <label>1</label>
    </ligand>
</feature>
<feature type="binding site" evidence="1">
    <location>
        <position position="26"/>
    </location>
    <ligand>
        <name>[4Fe-4S] cluster</name>
        <dbReference type="ChEBI" id="CHEBI:49883"/>
        <label>1</label>
    </ligand>
</feature>
<feature type="binding site" evidence="1">
    <location>
        <position position="29"/>
    </location>
    <ligand>
        <name>[4Fe-4S] cluster</name>
        <dbReference type="ChEBI" id="CHEBI:49883"/>
        <label>1</label>
    </ligand>
</feature>
<feature type="binding site" evidence="1">
    <location>
        <position position="35"/>
    </location>
    <ligand>
        <name>[4Fe-4S] cluster</name>
        <dbReference type="ChEBI" id="CHEBI:49883"/>
        <label>1</label>
    </ligand>
</feature>
<feature type="binding site" evidence="1">
    <location>
        <begin position="66"/>
        <end position="73"/>
    </location>
    <ligand>
        <name>ATP</name>
        <dbReference type="ChEBI" id="CHEBI:30616"/>
    </ligand>
</feature>
<feature type="binding site" evidence="1">
    <location>
        <position position="239"/>
    </location>
    <ligand>
        <name>[4Fe-4S] cluster</name>
        <dbReference type="ChEBI" id="CHEBI:49883"/>
        <label>2</label>
        <note>ligand shared with heterodimeric partner</note>
    </ligand>
</feature>
<feature type="binding site" evidence="1">
    <location>
        <position position="242"/>
    </location>
    <ligand>
        <name>[4Fe-4S] cluster</name>
        <dbReference type="ChEBI" id="CHEBI:49883"/>
        <label>2</label>
        <note>ligand shared with heterodimeric partner</note>
    </ligand>
</feature>
<feature type="sequence conflict" description="In Ref. 1; AAH94205." evidence="3" ref="1">
    <original>L</original>
    <variation>C</variation>
    <location>
        <position position="64"/>
    </location>
</feature>
<feature type="sequence conflict" description="In Ref. 1; AAH94205." evidence="3" ref="1">
    <original>F</original>
    <variation>L</variation>
    <location>
        <position position="288"/>
    </location>
</feature>
<accession>Q3KQF0</accession>
<accession>Q52KS7</accession>
<organism>
    <name type="scientific">Xenopus laevis</name>
    <name type="common">African clawed frog</name>
    <dbReference type="NCBI Taxonomy" id="8355"/>
    <lineage>
        <taxon>Eukaryota</taxon>
        <taxon>Metazoa</taxon>
        <taxon>Chordata</taxon>
        <taxon>Craniata</taxon>
        <taxon>Vertebrata</taxon>
        <taxon>Euteleostomi</taxon>
        <taxon>Amphibia</taxon>
        <taxon>Batrachia</taxon>
        <taxon>Anura</taxon>
        <taxon>Pipoidea</taxon>
        <taxon>Pipidae</taxon>
        <taxon>Xenopodinae</taxon>
        <taxon>Xenopus</taxon>
        <taxon>Xenopus</taxon>
    </lineage>
</organism>
<proteinExistence type="evidence at transcript level"/>
<comment type="function">
    <text evidence="1">Component of the cytosolic iron-sulfur (Fe/S) protein assembly (CIA) machinery. Required for maturation of extramitochondrial Fe-S proteins. The nubp1-nubp2 heterotetramer forms a Fe-S scaffold complex, mediating the de novo assembly of an Fe-S cluster and its transfer to target apoproteins.</text>
</comment>
<comment type="cofactor">
    <cofactor evidence="1">
        <name>[4Fe-4S] cluster</name>
        <dbReference type="ChEBI" id="CHEBI:49883"/>
    </cofactor>
    <text evidence="1">Binds 4 [4Fe-4S] clusters per heterotetramer. Contains two stable clusters in the N-termini of nubp1 and two labile, bridging clusters between subunits of the nubp1-nubp2 heterotetramer.</text>
</comment>
<comment type="subunit">
    <text evidence="1">Heterotetramer of 2 nubp1 and 2 nubp2 chains.</text>
</comment>
<comment type="subcellular location">
    <subcellularLocation>
        <location evidence="1">Cytoplasm</location>
    </subcellularLocation>
</comment>
<comment type="similarity">
    <text evidence="1">Belongs to the Mrp/NBP35 ATP-binding proteins family. NUBP1/NBP35 subfamily.</text>
</comment>
<dbReference type="EMBL" id="BC094205">
    <property type="protein sequence ID" value="AAH94205.1"/>
    <property type="molecule type" value="mRNA"/>
</dbReference>
<dbReference type="EMBL" id="BC106243">
    <property type="protein sequence ID" value="AAI06244.1"/>
    <property type="molecule type" value="mRNA"/>
</dbReference>
<dbReference type="RefSeq" id="NP_001088031.1">
    <property type="nucleotide sequence ID" value="NM_001094562.1"/>
</dbReference>
<dbReference type="SMR" id="Q3KQF0"/>
<dbReference type="DNASU" id="494723"/>
<dbReference type="GeneID" id="494723"/>
<dbReference type="KEGG" id="xla:494723"/>
<dbReference type="AGR" id="Xenbase:XB-GENE-992731"/>
<dbReference type="CTD" id="494723"/>
<dbReference type="Xenbase" id="XB-GENE-992731">
    <property type="gene designation" value="nubp1.L"/>
</dbReference>
<dbReference type="OMA" id="VSGCPMR"/>
<dbReference type="OrthoDB" id="1741334at2759"/>
<dbReference type="Proteomes" id="UP000186698">
    <property type="component" value="Chromosome 9_10L"/>
</dbReference>
<dbReference type="Bgee" id="494723">
    <property type="expression patterns" value="Expressed in zone of skin and 19 other cell types or tissues"/>
</dbReference>
<dbReference type="GO" id="GO:0005829">
    <property type="term" value="C:cytosol"/>
    <property type="evidence" value="ECO:0000250"/>
    <property type="project" value="UniProtKB"/>
</dbReference>
<dbReference type="GO" id="GO:0051539">
    <property type="term" value="F:4 iron, 4 sulfur cluster binding"/>
    <property type="evidence" value="ECO:0007669"/>
    <property type="project" value="UniProtKB-UniRule"/>
</dbReference>
<dbReference type="GO" id="GO:0005524">
    <property type="term" value="F:ATP binding"/>
    <property type="evidence" value="ECO:0007669"/>
    <property type="project" value="UniProtKB-KW"/>
</dbReference>
<dbReference type="GO" id="GO:0140663">
    <property type="term" value="F:ATP-dependent FeS chaperone activity"/>
    <property type="evidence" value="ECO:0007669"/>
    <property type="project" value="InterPro"/>
</dbReference>
<dbReference type="GO" id="GO:0051536">
    <property type="term" value="F:iron-sulfur cluster binding"/>
    <property type="evidence" value="ECO:0000250"/>
    <property type="project" value="UniProtKB"/>
</dbReference>
<dbReference type="GO" id="GO:0046872">
    <property type="term" value="F:metal ion binding"/>
    <property type="evidence" value="ECO:0007669"/>
    <property type="project" value="UniProtKB-KW"/>
</dbReference>
<dbReference type="GO" id="GO:0016226">
    <property type="term" value="P:iron-sulfur cluster assembly"/>
    <property type="evidence" value="ECO:0000250"/>
    <property type="project" value="UniProtKB"/>
</dbReference>
<dbReference type="CDD" id="cd02037">
    <property type="entry name" value="Mrp_NBP35"/>
    <property type="match status" value="1"/>
</dbReference>
<dbReference type="FunFam" id="3.40.50.300:FF:000427">
    <property type="entry name" value="Cytosolic Fe-S cluster assembly factor NUBP1"/>
    <property type="match status" value="1"/>
</dbReference>
<dbReference type="Gene3D" id="3.40.50.300">
    <property type="entry name" value="P-loop containing nucleotide triphosphate hydrolases"/>
    <property type="match status" value="1"/>
</dbReference>
<dbReference type="HAMAP" id="MF_02040">
    <property type="entry name" value="Mrp_NBP35"/>
    <property type="match status" value="1"/>
</dbReference>
<dbReference type="HAMAP" id="MF_03038">
    <property type="entry name" value="NUBP1"/>
    <property type="match status" value="1"/>
</dbReference>
<dbReference type="InterPro" id="IPR000808">
    <property type="entry name" value="Mrp-like_CS"/>
</dbReference>
<dbReference type="InterPro" id="IPR019591">
    <property type="entry name" value="Mrp/NBP35_ATP-bd"/>
</dbReference>
<dbReference type="InterPro" id="IPR028601">
    <property type="entry name" value="NUBP1/Nbp35"/>
</dbReference>
<dbReference type="InterPro" id="IPR027417">
    <property type="entry name" value="P-loop_NTPase"/>
</dbReference>
<dbReference type="InterPro" id="IPR033756">
    <property type="entry name" value="YlxH/NBP35"/>
</dbReference>
<dbReference type="PANTHER" id="PTHR23264:SF35">
    <property type="entry name" value="CYTOSOLIC FE-S CLUSTER ASSEMBLY FACTOR NUBP1"/>
    <property type="match status" value="1"/>
</dbReference>
<dbReference type="PANTHER" id="PTHR23264">
    <property type="entry name" value="NUCLEOTIDE-BINDING PROTEIN NBP35 YEAST -RELATED"/>
    <property type="match status" value="1"/>
</dbReference>
<dbReference type="Pfam" id="PF10609">
    <property type="entry name" value="ParA"/>
    <property type="match status" value="1"/>
</dbReference>
<dbReference type="SUPFAM" id="SSF52540">
    <property type="entry name" value="P-loop containing nucleoside triphosphate hydrolases"/>
    <property type="match status" value="1"/>
</dbReference>
<dbReference type="PROSITE" id="PS01215">
    <property type="entry name" value="MRP"/>
    <property type="match status" value="1"/>
</dbReference>
<evidence type="ECO:0000255" key="1">
    <source>
        <dbReference type="HAMAP-Rule" id="MF_03038"/>
    </source>
</evidence>
<evidence type="ECO:0000256" key="2">
    <source>
        <dbReference type="SAM" id="MobiDB-lite"/>
    </source>
</evidence>
<evidence type="ECO:0000305" key="3"/>